<reference key="1">
    <citation type="submission" date="2007-05" db="EMBL/GenBank/DDBJ databases">
        <title>Complete sequence of chromosome of Acidiphilium cryptum JF-5.</title>
        <authorList>
            <consortium name="US DOE Joint Genome Institute"/>
            <person name="Copeland A."/>
            <person name="Lucas S."/>
            <person name="Lapidus A."/>
            <person name="Barry K."/>
            <person name="Detter J.C."/>
            <person name="Glavina del Rio T."/>
            <person name="Hammon N."/>
            <person name="Israni S."/>
            <person name="Dalin E."/>
            <person name="Tice H."/>
            <person name="Pitluck S."/>
            <person name="Sims D."/>
            <person name="Brettin T."/>
            <person name="Bruce D."/>
            <person name="Han C."/>
            <person name="Schmutz J."/>
            <person name="Larimer F."/>
            <person name="Land M."/>
            <person name="Hauser L."/>
            <person name="Kyrpides N."/>
            <person name="Kim E."/>
            <person name="Magnuson T."/>
            <person name="Richardson P."/>
        </authorList>
    </citation>
    <scope>NUCLEOTIDE SEQUENCE [LARGE SCALE GENOMIC DNA]</scope>
    <source>
        <strain>JF-5</strain>
    </source>
</reference>
<keyword id="KW-0963">Cytoplasm</keyword>
<keyword id="KW-0251">Elongation factor</keyword>
<keyword id="KW-0648">Protein biosynthesis</keyword>
<keyword id="KW-1185">Reference proteome</keyword>
<protein>
    <recommendedName>
        <fullName evidence="1">Elongation factor P</fullName>
        <shortName evidence="1">EF-P</shortName>
    </recommendedName>
</protein>
<accession>A5FZ78</accession>
<sequence>MKQQANLIRAGQVIEHDGRRWTVLKQQIITPGKGGAFIQVEMRDLKTGNKTNERWRTADTVERLMTDNRDYTYSYTDGDNLVLMDGETFEQFLVPAELLGDQAPFLQDNMAVIVDLVEGDPVGIHLPATVTLEIVEADPVVKGQTASSSYKPAKLSNGVKVMVPPFIEAGERIVVRTEDSTYVERAKG</sequence>
<evidence type="ECO:0000255" key="1">
    <source>
        <dbReference type="HAMAP-Rule" id="MF_00141"/>
    </source>
</evidence>
<organism>
    <name type="scientific">Acidiphilium cryptum (strain JF-5)</name>
    <dbReference type="NCBI Taxonomy" id="349163"/>
    <lineage>
        <taxon>Bacteria</taxon>
        <taxon>Pseudomonadati</taxon>
        <taxon>Pseudomonadota</taxon>
        <taxon>Alphaproteobacteria</taxon>
        <taxon>Acetobacterales</taxon>
        <taxon>Acidocellaceae</taxon>
        <taxon>Acidiphilium</taxon>
    </lineage>
</organism>
<dbReference type="EMBL" id="CP000697">
    <property type="protein sequence ID" value="ABQ30910.1"/>
    <property type="molecule type" value="Genomic_DNA"/>
</dbReference>
<dbReference type="RefSeq" id="WP_007423006.1">
    <property type="nucleotide sequence ID" value="NC_009484.1"/>
</dbReference>
<dbReference type="SMR" id="A5FZ78"/>
<dbReference type="STRING" id="349163.Acry_1706"/>
<dbReference type="KEGG" id="acr:Acry_1706"/>
<dbReference type="eggNOG" id="COG0231">
    <property type="taxonomic scope" value="Bacteria"/>
</dbReference>
<dbReference type="HOGENOM" id="CLU_074944_1_1_5"/>
<dbReference type="UniPathway" id="UPA00345"/>
<dbReference type="Proteomes" id="UP000000245">
    <property type="component" value="Chromosome"/>
</dbReference>
<dbReference type="GO" id="GO:0005737">
    <property type="term" value="C:cytoplasm"/>
    <property type="evidence" value="ECO:0007669"/>
    <property type="project" value="UniProtKB-SubCell"/>
</dbReference>
<dbReference type="GO" id="GO:0003746">
    <property type="term" value="F:translation elongation factor activity"/>
    <property type="evidence" value="ECO:0007669"/>
    <property type="project" value="UniProtKB-UniRule"/>
</dbReference>
<dbReference type="GO" id="GO:0043043">
    <property type="term" value="P:peptide biosynthetic process"/>
    <property type="evidence" value="ECO:0007669"/>
    <property type="project" value="InterPro"/>
</dbReference>
<dbReference type="CDD" id="cd04470">
    <property type="entry name" value="S1_EF-P_repeat_1"/>
    <property type="match status" value="1"/>
</dbReference>
<dbReference type="CDD" id="cd05794">
    <property type="entry name" value="S1_EF-P_repeat_2"/>
    <property type="match status" value="1"/>
</dbReference>
<dbReference type="FunFam" id="2.30.30.30:FF:000003">
    <property type="entry name" value="Elongation factor P"/>
    <property type="match status" value="1"/>
</dbReference>
<dbReference type="FunFam" id="2.40.50.140:FF:000004">
    <property type="entry name" value="Elongation factor P"/>
    <property type="match status" value="1"/>
</dbReference>
<dbReference type="FunFam" id="2.40.50.140:FF:000009">
    <property type="entry name" value="Elongation factor P"/>
    <property type="match status" value="1"/>
</dbReference>
<dbReference type="Gene3D" id="2.30.30.30">
    <property type="match status" value="1"/>
</dbReference>
<dbReference type="Gene3D" id="2.40.50.140">
    <property type="entry name" value="Nucleic acid-binding proteins"/>
    <property type="match status" value="2"/>
</dbReference>
<dbReference type="HAMAP" id="MF_00141">
    <property type="entry name" value="EF_P"/>
    <property type="match status" value="1"/>
</dbReference>
<dbReference type="InterPro" id="IPR015365">
    <property type="entry name" value="Elong-fact-P_C"/>
</dbReference>
<dbReference type="InterPro" id="IPR012340">
    <property type="entry name" value="NA-bd_OB-fold"/>
</dbReference>
<dbReference type="InterPro" id="IPR014722">
    <property type="entry name" value="Rib_uL2_dom2"/>
</dbReference>
<dbReference type="InterPro" id="IPR020599">
    <property type="entry name" value="Transl_elong_fac_P/YeiP"/>
</dbReference>
<dbReference type="InterPro" id="IPR013185">
    <property type="entry name" value="Transl_elong_KOW-like"/>
</dbReference>
<dbReference type="InterPro" id="IPR001059">
    <property type="entry name" value="Transl_elong_P/YeiP_cen"/>
</dbReference>
<dbReference type="InterPro" id="IPR013852">
    <property type="entry name" value="Transl_elong_P/YeiP_CS"/>
</dbReference>
<dbReference type="InterPro" id="IPR011768">
    <property type="entry name" value="Transl_elongation_fac_P"/>
</dbReference>
<dbReference type="InterPro" id="IPR008991">
    <property type="entry name" value="Translation_prot_SH3-like_sf"/>
</dbReference>
<dbReference type="NCBIfam" id="TIGR00038">
    <property type="entry name" value="efp"/>
    <property type="match status" value="1"/>
</dbReference>
<dbReference type="NCBIfam" id="NF001810">
    <property type="entry name" value="PRK00529.1"/>
    <property type="match status" value="1"/>
</dbReference>
<dbReference type="PANTHER" id="PTHR30053">
    <property type="entry name" value="ELONGATION FACTOR P"/>
    <property type="match status" value="1"/>
</dbReference>
<dbReference type="PANTHER" id="PTHR30053:SF14">
    <property type="entry name" value="TRANSLATION ELONGATION FACTOR KOW-LIKE DOMAIN-CONTAINING PROTEIN"/>
    <property type="match status" value="1"/>
</dbReference>
<dbReference type="Pfam" id="PF01132">
    <property type="entry name" value="EFP"/>
    <property type="match status" value="1"/>
</dbReference>
<dbReference type="Pfam" id="PF08207">
    <property type="entry name" value="EFP_N"/>
    <property type="match status" value="1"/>
</dbReference>
<dbReference type="Pfam" id="PF09285">
    <property type="entry name" value="Elong-fact-P_C"/>
    <property type="match status" value="1"/>
</dbReference>
<dbReference type="PIRSF" id="PIRSF005901">
    <property type="entry name" value="EF-P"/>
    <property type="match status" value="1"/>
</dbReference>
<dbReference type="SMART" id="SM01185">
    <property type="entry name" value="EFP"/>
    <property type="match status" value="1"/>
</dbReference>
<dbReference type="SMART" id="SM00841">
    <property type="entry name" value="Elong-fact-P_C"/>
    <property type="match status" value="1"/>
</dbReference>
<dbReference type="SUPFAM" id="SSF50249">
    <property type="entry name" value="Nucleic acid-binding proteins"/>
    <property type="match status" value="2"/>
</dbReference>
<dbReference type="SUPFAM" id="SSF50104">
    <property type="entry name" value="Translation proteins SH3-like domain"/>
    <property type="match status" value="1"/>
</dbReference>
<dbReference type="PROSITE" id="PS01275">
    <property type="entry name" value="EFP"/>
    <property type="match status" value="1"/>
</dbReference>
<gene>
    <name evidence="1" type="primary">efp</name>
    <name type="ordered locus">Acry_1706</name>
</gene>
<comment type="function">
    <text evidence="1">Involved in peptide bond synthesis. Stimulates efficient translation and peptide-bond synthesis on native or reconstituted 70S ribosomes in vitro. Probably functions indirectly by altering the affinity of the ribosome for aminoacyl-tRNA, thus increasing their reactivity as acceptors for peptidyl transferase.</text>
</comment>
<comment type="pathway">
    <text evidence="1">Protein biosynthesis; polypeptide chain elongation.</text>
</comment>
<comment type="subcellular location">
    <subcellularLocation>
        <location evidence="1">Cytoplasm</location>
    </subcellularLocation>
</comment>
<comment type="similarity">
    <text evidence="1">Belongs to the elongation factor P family.</text>
</comment>
<feature type="chain" id="PRO_1000010668" description="Elongation factor P">
    <location>
        <begin position="1"/>
        <end position="188"/>
    </location>
</feature>
<proteinExistence type="inferred from homology"/>
<name>EFP_ACICJ</name>